<evidence type="ECO:0000255" key="1">
    <source>
        <dbReference type="HAMAP-Rule" id="MF_00530"/>
    </source>
</evidence>
<evidence type="ECO:0000256" key="2">
    <source>
        <dbReference type="SAM" id="MobiDB-lite"/>
    </source>
</evidence>
<accession>B9DME2</accession>
<dbReference type="EMBL" id="AM295250">
    <property type="protein sequence ID" value="CAL28511.1"/>
    <property type="molecule type" value="Genomic_DNA"/>
</dbReference>
<dbReference type="RefSeq" id="WP_015900851.1">
    <property type="nucleotide sequence ID" value="NC_012121.1"/>
</dbReference>
<dbReference type="SMR" id="B9DME2"/>
<dbReference type="GeneID" id="93794059"/>
<dbReference type="KEGG" id="sca:SCA_1605"/>
<dbReference type="eggNOG" id="COG0355">
    <property type="taxonomic scope" value="Bacteria"/>
</dbReference>
<dbReference type="HOGENOM" id="CLU_084338_1_0_9"/>
<dbReference type="OrthoDB" id="9804110at2"/>
<dbReference type="BioCyc" id="SCAR396513:SCA_RS08155-MONOMER"/>
<dbReference type="Proteomes" id="UP000000444">
    <property type="component" value="Chromosome"/>
</dbReference>
<dbReference type="GO" id="GO:0005886">
    <property type="term" value="C:plasma membrane"/>
    <property type="evidence" value="ECO:0007669"/>
    <property type="project" value="UniProtKB-SubCell"/>
</dbReference>
<dbReference type="GO" id="GO:0045259">
    <property type="term" value="C:proton-transporting ATP synthase complex"/>
    <property type="evidence" value="ECO:0007669"/>
    <property type="project" value="UniProtKB-KW"/>
</dbReference>
<dbReference type="GO" id="GO:0005524">
    <property type="term" value="F:ATP binding"/>
    <property type="evidence" value="ECO:0007669"/>
    <property type="project" value="UniProtKB-UniRule"/>
</dbReference>
<dbReference type="GO" id="GO:0046933">
    <property type="term" value="F:proton-transporting ATP synthase activity, rotational mechanism"/>
    <property type="evidence" value="ECO:0007669"/>
    <property type="project" value="UniProtKB-UniRule"/>
</dbReference>
<dbReference type="CDD" id="cd12152">
    <property type="entry name" value="F1-ATPase_delta"/>
    <property type="match status" value="1"/>
</dbReference>
<dbReference type="FunFam" id="1.20.5.440:FF:000001">
    <property type="entry name" value="ATP synthase epsilon chain"/>
    <property type="match status" value="1"/>
</dbReference>
<dbReference type="Gene3D" id="1.20.5.440">
    <property type="entry name" value="ATP synthase delta/epsilon subunit, C-terminal domain"/>
    <property type="match status" value="1"/>
</dbReference>
<dbReference type="Gene3D" id="2.60.15.10">
    <property type="entry name" value="F0F1 ATP synthase delta/epsilon subunit, N-terminal"/>
    <property type="match status" value="1"/>
</dbReference>
<dbReference type="HAMAP" id="MF_00530">
    <property type="entry name" value="ATP_synth_epsil_bac"/>
    <property type="match status" value="1"/>
</dbReference>
<dbReference type="InterPro" id="IPR036794">
    <property type="entry name" value="ATP_F1_dsu/esu_C_sf"/>
</dbReference>
<dbReference type="InterPro" id="IPR001469">
    <property type="entry name" value="ATP_synth_F1_dsu/esu"/>
</dbReference>
<dbReference type="InterPro" id="IPR020546">
    <property type="entry name" value="ATP_synth_F1_dsu/esu_N"/>
</dbReference>
<dbReference type="InterPro" id="IPR020547">
    <property type="entry name" value="ATP_synth_F1_esu_C"/>
</dbReference>
<dbReference type="InterPro" id="IPR036771">
    <property type="entry name" value="ATPsynth_dsu/esu_N"/>
</dbReference>
<dbReference type="NCBIfam" id="TIGR01216">
    <property type="entry name" value="ATP_synt_epsi"/>
    <property type="match status" value="1"/>
</dbReference>
<dbReference type="NCBIfam" id="NF001846">
    <property type="entry name" value="PRK00571.1-3"/>
    <property type="match status" value="1"/>
</dbReference>
<dbReference type="PANTHER" id="PTHR13822">
    <property type="entry name" value="ATP SYNTHASE DELTA/EPSILON CHAIN"/>
    <property type="match status" value="1"/>
</dbReference>
<dbReference type="PANTHER" id="PTHR13822:SF10">
    <property type="entry name" value="ATP SYNTHASE EPSILON CHAIN, CHLOROPLASTIC"/>
    <property type="match status" value="1"/>
</dbReference>
<dbReference type="Pfam" id="PF00401">
    <property type="entry name" value="ATP-synt_DE"/>
    <property type="match status" value="1"/>
</dbReference>
<dbReference type="Pfam" id="PF02823">
    <property type="entry name" value="ATP-synt_DE_N"/>
    <property type="match status" value="1"/>
</dbReference>
<dbReference type="SUPFAM" id="SSF46604">
    <property type="entry name" value="Epsilon subunit of F1F0-ATP synthase C-terminal domain"/>
    <property type="match status" value="1"/>
</dbReference>
<dbReference type="SUPFAM" id="SSF51344">
    <property type="entry name" value="Epsilon subunit of F1F0-ATP synthase N-terminal domain"/>
    <property type="match status" value="1"/>
</dbReference>
<keyword id="KW-0066">ATP synthesis</keyword>
<keyword id="KW-1003">Cell membrane</keyword>
<keyword id="KW-0139">CF(1)</keyword>
<keyword id="KW-0375">Hydrogen ion transport</keyword>
<keyword id="KW-0406">Ion transport</keyword>
<keyword id="KW-0472">Membrane</keyword>
<keyword id="KW-1185">Reference proteome</keyword>
<keyword id="KW-0813">Transport</keyword>
<comment type="function">
    <text evidence="1">Produces ATP from ADP in the presence of a proton gradient across the membrane.</text>
</comment>
<comment type="subunit">
    <text evidence="1">F-type ATPases have 2 components, CF(1) - the catalytic core - and CF(0) - the membrane proton channel. CF(1) has five subunits: alpha(3), beta(3), gamma(1), delta(1), epsilon(1). CF(0) has three main subunits: a, b and c.</text>
</comment>
<comment type="subcellular location">
    <subcellularLocation>
        <location evidence="1">Cell membrane</location>
        <topology evidence="1">Peripheral membrane protein</topology>
    </subcellularLocation>
</comment>
<comment type="similarity">
    <text evidence="1">Belongs to the ATPase epsilon chain family.</text>
</comment>
<name>ATPE_STACT</name>
<sequence>MNTMNVNIVTPNGSVYNQDNVEITVLQTVGGDMGVMYGHIPTVTAIHTGYVKVHYTDGIDYIAVSDGFVEIRQEKTSIIVQTAEKAEDIDVRRAESAKERAESHLNNNDEDTDINRAKRALERAENRLKVSDLLK</sequence>
<feature type="chain" id="PRO_1000146347" description="ATP synthase epsilon chain">
    <location>
        <begin position="1"/>
        <end position="135"/>
    </location>
</feature>
<feature type="region of interest" description="Disordered" evidence="2">
    <location>
        <begin position="90"/>
        <end position="115"/>
    </location>
</feature>
<feature type="compositionally biased region" description="Basic and acidic residues" evidence="2">
    <location>
        <begin position="90"/>
        <end position="103"/>
    </location>
</feature>
<gene>
    <name evidence="1" type="primary">atpC</name>
    <name type="ordered locus">Sca_1605</name>
</gene>
<proteinExistence type="inferred from homology"/>
<protein>
    <recommendedName>
        <fullName evidence="1">ATP synthase epsilon chain</fullName>
    </recommendedName>
    <alternativeName>
        <fullName evidence="1">ATP synthase F1 sector epsilon subunit</fullName>
    </alternativeName>
    <alternativeName>
        <fullName evidence="1">F-ATPase epsilon subunit</fullName>
    </alternativeName>
</protein>
<organism>
    <name type="scientific">Staphylococcus carnosus (strain TM300)</name>
    <dbReference type="NCBI Taxonomy" id="396513"/>
    <lineage>
        <taxon>Bacteria</taxon>
        <taxon>Bacillati</taxon>
        <taxon>Bacillota</taxon>
        <taxon>Bacilli</taxon>
        <taxon>Bacillales</taxon>
        <taxon>Staphylococcaceae</taxon>
        <taxon>Staphylococcus</taxon>
    </lineage>
</organism>
<reference key="1">
    <citation type="journal article" date="2009" name="Appl. Environ. Microbiol.">
        <title>Genome analysis of the meat starter culture bacterium Staphylococcus carnosus TM300.</title>
        <authorList>
            <person name="Rosenstein R."/>
            <person name="Nerz C."/>
            <person name="Biswas L."/>
            <person name="Resch A."/>
            <person name="Raddatz G."/>
            <person name="Schuster S.C."/>
            <person name="Goetz F."/>
        </authorList>
    </citation>
    <scope>NUCLEOTIDE SEQUENCE [LARGE SCALE GENOMIC DNA]</scope>
    <source>
        <strain>TM300</strain>
    </source>
</reference>